<accession>Q9NWS6</accession>
<accession>B3KWG4</accession>
<accession>B4DY02</accession>
<accession>Q5TII5</accession>
<accession>Q96CY3</accession>
<organism>
    <name type="scientific">Homo sapiens</name>
    <name type="common">Human</name>
    <dbReference type="NCBI Taxonomy" id="9606"/>
    <lineage>
        <taxon>Eukaryota</taxon>
        <taxon>Metazoa</taxon>
        <taxon>Chordata</taxon>
        <taxon>Craniata</taxon>
        <taxon>Vertebrata</taxon>
        <taxon>Euteleostomi</taxon>
        <taxon>Mammalia</taxon>
        <taxon>Eutheria</taxon>
        <taxon>Euarchontoglires</taxon>
        <taxon>Primates</taxon>
        <taxon>Haplorrhini</taxon>
        <taxon>Catarrhini</taxon>
        <taxon>Hominidae</taxon>
        <taxon>Homo</taxon>
    </lineage>
</organism>
<sequence>MDSVEKTTNRSEQKSRKFLKSLIRKQPQELLLVIGTGVSAAVAPGIPALCSWRSCIEAVIEAAEQLEVLHPGDVAEFRRKVTKDRDLLVVAHDLIRKMSPRTGDAKPSFFQDCLMEVFDDLEQHIRSPVVLQSILSLMDRGAMVLTTNYDNLLEAFGRRQNKPMESLDLKDKTKVLEWARGHMKYGVLHIHGLYTDPCGVVLDPSGYKDVTQDAEVMEVLQNLYRTKSFLFVGCGETLRDQIFQALFLYSVPNKVDLEHYMLVLKENEDHFFKHQADMLLHGIKVVSYGDCFDHFPGYVQDLATQICKQQSPDADRVDSTTLLGNACQDCAKRKLEENGIEVSKKRTQSDTDDAGGS</sequence>
<comment type="interaction">
    <interactant intactId="EBI-8638992">
        <id>Q9NWS6</id>
    </interactant>
    <interactant intactId="EBI-4401674">
        <id>Q96BJ3</id>
        <label>AIDA</label>
    </interactant>
    <organismsDiffer>false</organismsDiffer>
    <experiments>6</experiments>
</comment>
<comment type="interaction">
    <interactant intactId="EBI-8638992">
        <id>Q9NWS6</id>
    </interactant>
    <interactant intactId="EBI-10179267">
        <id>O00244</id>
        <label>ATOX1</label>
    </interactant>
    <organismsDiffer>false</organismsDiffer>
    <experiments>6</experiments>
</comment>
<comment type="interaction">
    <interactant intactId="EBI-8638992">
        <id>Q9NWS6</id>
    </interactant>
    <interactant intactId="EBI-295634">
        <id>Q16543</id>
        <label>CDC37</label>
    </interactant>
    <organismsDiffer>false</organismsDiffer>
    <experiments>3</experiments>
</comment>
<comment type="interaction">
    <interactant intactId="EBI-8638992">
        <id>Q9NWS6</id>
    </interactant>
    <interactant intactId="EBI-10303987">
        <id>Q9UHG0</id>
        <label>DCDC2</label>
    </interactant>
    <organismsDiffer>false</organismsDiffer>
    <experiments>3</experiments>
</comment>
<comment type="interaction">
    <interactant intactId="EBI-8638992">
        <id>Q9NWS6</id>
    </interactant>
    <interactant intactId="EBI-8638992">
        <id>Q9NWS6</id>
        <label>FAM118A</label>
    </interactant>
    <organismsDiffer>false</organismsDiffer>
    <experiments>4</experiments>
</comment>
<comment type="interaction">
    <interactant intactId="EBI-8638992">
        <id>Q9NWS6</id>
    </interactant>
    <interactant intactId="EBI-726822">
        <id>Q9BPY3</id>
        <label>FAM118B</label>
    </interactant>
    <organismsDiffer>false</organismsDiffer>
    <experiments>6</experiments>
</comment>
<comment type="interaction">
    <interactant intactId="EBI-8638992">
        <id>Q9NWS6</id>
    </interactant>
    <interactant intactId="EBI-374781">
        <id>O76003</id>
        <label>GLRX3</label>
    </interactant>
    <organismsDiffer>false</organismsDiffer>
    <experiments>3</experiments>
</comment>
<comment type="interaction">
    <interactant intactId="EBI-8638992">
        <id>Q9NWS6</id>
    </interactant>
    <interactant intactId="EBI-739832">
        <id>Q8TBB1</id>
        <label>LNX1</label>
    </interactant>
    <organismsDiffer>false</organismsDiffer>
    <experiments>4</experiments>
</comment>
<comment type="interaction">
    <interactant intactId="EBI-8638992">
        <id>Q9NWS6</id>
    </interactant>
    <interactant intactId="EBI-748229">
        <id>Q9H8S9</id>
        <label>MOB1A</label>
    </interactant>
    <organismsDiffer>false</organismsDiffer>
    <experiments>3</experiments>
</comment>
<comment type="interaction">
    <interactant intactId="EBI-8638992">
        <id>Q9NWS6</id>
    </interactant>
    <interactant intactId="EBI-9679267">
        <id>Q70IA8</id>
        <label>MOB3C</label>
    </interactant>
    <organismsDiffer>false</organismsDiffer>
    <experiments>4</experiments>
</comment>
<comment type="interaction">
    <interactant intactId="EBI-8638992">
        <id>Q9NWS6</id>
    </interactant>
    <interactant intactId="EBI-2340927">
        <id>P78317</id>
        <label>RNF4</label>
    </interactant>
    <organismsDiffer>false</organismsDiffer>
    <experiments>3</experiments>
</comment>
<comment type="interaction">
    <interactant intactId="EBI-8638992">
        <id>Q9NWS6</id>
    </interactant>
    <interactant intactId="EBI-727004">
        <id>O00560</id>
        <label>SDCBP</label>
    </interactant>
    <organismsDiffer>false</organismsDiffer>
    <experiments>3</experiments>
</comment>
<comment type="interaction">
    <interactant intactId="EBI-8638992">
        <id>Q9NWS6</id>
    </interactant>
    <interactant intactId="EBI-10180829">
        <id>Q7KZS0</id>
        <label>UBE2I</label>
    </interactant>
    <organismsDiffer>false</organismsDiffer>
    <experiments>3</experiments>
</comment>
<comment type="interaction">
    <interactant intactId="EBI-8638992">
        <id>Q9NWS6</id>
    </interactant>
    <interactant intactId="EBI-750427">
        <id>P57081</id>
        <label>WDR4</label>
    </interactant>
    <organismsDiffer>false</organismsDiffer>
    <experiments>7</experiments>
</comment>
<comment type="subcellular location">
    <subcellularLocation>
        <location evidence="6">Membrane</location>
        <topology evidence="6">Single-pass membrane protein</topology>
    </subcellularLocation>
</comment>
<comment type="alternative products">
    <event type="alternative splicing"/>
    <isoform>
        <id>Q9NWS6-1</id>
        <name>1</name>
        <sequence type="displayed"/>
    </isoform>
    <isoform>
        <id>Q9NWS6-2</id>
        <name>2</name>
        <sequence type="described" ref="VSP_056990"/>
    </isoform>
</comment>
<comment type="similarity">
    <text evidence="6">Belongs to the FAM118 family.</text>
</comment>
<dbReference type="EMBL" id="AK000642">
    <property type="protein sequence ID" value="BAA91301.1"/>
    <property type="molecule type" value="mRNA"/>
</dbReference>
<dbReference type="EMBL" id="AK125027">
    <property type="protein sequence ID" value="BAG54126.1"/>
    <property type="molecule type" value="mRNA"/>
</dbReference>
<dbReference type="EMBL" id="AK302205">
    <property type="protein sequence ID" value="BAG63564.1"/>
    <property type="molecule type" value="mRNA"/>
</dbReference>
<dbReference type="EMBL" id="CR456403">
    <property type="protein sequence ID" value="CAG30289.1"/>
    <property type="molecule type" value="mRNA"/>
</dbReference>
<dbReference type="EMBL" id="AL008718">
    <property type="status" value="NOT_ANNOTATED_CDS"/>
    <property type="molecule type" value="Genomic_DNA"/>
</dbReference>
<dbReference type="EMBL" id="BC013696">
    <property type="protein sequence ID" value="AAH13696.1"/>
    <property type="molecule type" value="mRNA"/>
</dbReference>
<dbReference type="CCDS" id="CCDS14065.1">
    <molecule id="Q9NWS6-1"/>
</dbReference>
<dbReference type="RefSeq" id="NP_001098065.1">
    <molecule id="Q9NWS6-1"/>
    <property type="nucleotide sequence ID" value="NM_001104595.2"/>
</dbReference>
<dbReference type="RefSeq" id="NP_001336842.1">
    <molecule id="Q9NWS6-1"/>
    <property type="nucleotide sequence ID" value="NM_001349913.2"/>
</dbReference>
<dbReference type="RefSeq" id="NP_060381.2">
    <molecule id="Q9NWS6-1"/>
    <property type="nucleotide sequence ID" value="NM_017911.4"/>
</dbReference>
<dbReference type="SMR" id="Q9NWS6"/>
<dbReference type="BioGRID" id="120339">
    <property type="interactions" value="21"/>
</dbReference>
<dbReference type="FunCoup" id="Q9NWS6">
    <property type="interactions" value="120"/>
</dbReference>
<dbReference type="IntAct" id="Q9NWS6">
    <property type="interactions" value="16"/>
</dbReference>
<dbReference type="MINT" id="Q9NWS6"/>
<dbReference type="STRING" id="9606.ENSP00000216214"/>
<dbReference type="GlyGen" id="Q9NWS6">
    <property type="glycosylation" value="1 site, 1 O-linked glycan (1 site)"/>
</dbReference>
<dbReference type="iPTMnet" id="Q9NWS6"/>
<dbReference type="PhosphoSitePlus" id="Q9NWS6"/>
<dbReference type="BioMuta" id="FAM118A"/>
<dbReference type="DMDM" id="296434496"/>
<dbReference type="jPOST" id="Q9NWS6"/>
<dbReference type="MassIVE" id="Q9NWS6"/>
<dbReference type="PaxDb" id="9606-ENSP00000216214"/>
<dbReference type="PeptideAtlas" id="Q9NWS6"/>
<dbReference type="ProteomicsDB" id="82972">
    <molecule id="Q9NWS6-1"/>
</dbReference>
<dbReference type="Pumba" id="Q9NWS6"/>
<dbReference type="Antibodypedia" id="13685">
    <property type="antibodies" value="49 antibodies from 13 providers"/>
</dbReference>
<dbReference type="DNASU" id="55007"/>
<dbReference type="Ensembl" id="ENST00000216214.7">
    <molecule id="Q9NWS6-1"/>
    <property type="protein sequence ID" value="ENSP00000216214.3"/>
    <property type="gene ID" value="ENSG00000100376.12"/>
</dbReference>
<dbReference type="Ensembl" id="ENST00000441876.7">
    <molecule id="Q9NWS6-1"/>
    <property type="protein sequence ID" value="ENSP00000395892.2"/>
    <property type="gene ID" value="ENSG00000100376.12"/>
</dbReference>
<dbReference type="GeneID" id="55007"/>
<dbReference type="KEGG" id="hsa:55007"/>
<dbReference type="MANE-Select" id="ENST00000441876.7">
    <property type="protein sequence ID" value="ENSP00000395892.2"/>
    <property type="RefSeq nucleotide sequence ID" value="NM_017911.4"/>
    <property type="RefSeq protein sequence ID" value="NP_060381.2"/>
</dbReference>
<dbReference type="UCSC" id="uc003bfz.5">
    <molecule id="Q9NWS6-1"/>
    <property type="organism name" value="human"/>
</dbReference>
<dbReference type="AGR" id="HGNC:1313"/>
<dbReference type="CTD" id="55007"/>
<dbReference type="DisGeNET" id="55007"/>
<dbReference type="GeneCards" id="FAM118A"/>
<dbReference type="HGNC" id="HGNC:1313">
    <property type="gene designation" value="FAM118A"/>
</dbReference>
<dbReference type="HPA" id="ENSG00000100376">
    <property type="expression patterns" value="Low tissue specificity"/>
</dbReference>
<dbReference type="neXtProt" id="NX_Q9NWS6"/>
<dbReference type="OpenTargets" id="ENSG00000100376"/>
<dbReference type="PharmGKB" id="PA25890"/>
<dbReference type="VEuPathDB" id="HostDB:ENSG00000100376"/>
<dbReference type="eggNOG" id="ENOG502QSNY">
    <property type="taxonomic scope" value="Eukaryota"/>
</dbReference>
<dbReference type="GeneTree" id="ENSGT00390000010215"/>
<dbReference type="HOGENOM" id="CLU_063072_1_0_1"/>
<dbReference type="InParanoid" id="Q9NWS6"/>
<dbReference type="OMA" id="YRDVTQD"/>
<dbReference type="OrthoDB" id="6247875at2759"/>
<dbReference type="PAN-GO" id="Q9NWS6">
    <property type="GO annotations" value="0 GO annotations based on evolutionary models"/>
</dbReference>
<dbReference type="PhylomeDB" id="Q9NWS6"/>
<dbReference type="TreeFam" id="TF332439"/>
<dbReference type="PathwayCommons" id="Q9NWS6"/>
<dbReference type="SignaLink" id="Q9NWS6"/>
<dbReference type="BioGRID-ORCS" id="55007">
    <property type="hits" value="13 hits in 1156 CRISPR screens"/>
</dbReference>
<dbReference type="ChiTaRS" id="FAM118A">
    <property type="organism name" value="human"/>
</dbReference>
<dbReference type="GenomeRNAi" id="55007"/>
<dbReference type="Pharos" id="Q9NWS6">
    <property type="development level" value="Tdark"/>
</dbReference>
<dbReference type="PRO" id="PR:Q9NWS6"/>
<dbReference type="Proteomes" id="UP000005640">
    <property type="component" value="Chromosome 22"/>
</dbReference>
<dbReference type="RNAct" id="Q9NWS6">
    <property type="molecule type" value="protein"/>
</dbReference>
<dbReference type="Bgee" id="ENSG00000100376">
    <property type="expression patterns" value="Expressed in right testis and 158 other cell types or tissues"/>
</dbReference>
<dbReference type="ExpressionAtlas" id="Q9NWS6">
    <property type="expression patterns" value="baseline and differential"/>
</dbReference>
<dbReference type="GO" id="GO:0016020">
    <property type="term" value="C:membrane"/>
    <property type="evidence" value="ECO:0007669"/>
    <property type="project" value="UniProtKB-SubCell"/>
</dbReference>
<dbReference type="GO" id="GO:0042802">
    <property type="term" value="F:identical protein binding"/>
    <property type="evidence" value="ECO:0000353"/>
    <property type="project" value="IntAct"/>
</dbReference>
<dbReference type="InterPro" id="IPR038916">
    <property type="entry name" value="FAM118"/>
</dbReference>
<dbReference type="PANTHER" id="PTHR28623:SF2">
    <property type="entry name" value="PROTEIN FAM118A"/>
    <property type="match status" value="1"/>
</dbReference>
<dbReference type="PANTHER" id="PTHR28623">
    <property type="entry name" value="PROTEIN FAM118B"/>
    <property type="match status" value="1"/>
</dbReference>
<dbReference type="Pfam" id="PF13289">
    <property type="entry name" value="SIR2_2"/>
    <property type="match status" value="1"/>
</dbReference>
<keyword id="KW-0007">Acetylation</keyword>
<keyword id="KW-0025">Alternative splicing</keyword>
<keyword id="KW-0472">Membrane</keyword>
<keyword id="KW-0597">Phosphoprotein</keyword>
<keyword id="KW-1267">Proteomics identification</keyword>
<keyword id="KW-1185">Reference proteome</keyword>
<keyword id="KW-0812">Transmembrane</keyword>
<keyword id="KW-1133">Transmembrane helix</keyword>
<proteinExistence type="evidence at protein level"/>
<name>F118A_HUMAN</name>
<feature type="chain" id="PRO_0000079572" description="Protein FAM118A">
    <location>
        <begin position="1"/>
        <end position="357"/>
    </location>
</feature>
<feature type="transmembrane region" description="Helical" evidence="1">
    <location>
        <begin position="30"/>
        <end position="50"/>
    </location>
</feature>
<feature type="modified residue" description="N-acetylmethionine" evidence="7">
    <location>
        <position position="1"/>
    </location>
</feature>
<feature type="modified residue" description="Phosphoserine" evidence="8">
    <location>
        <position position="311"/>
    </location>
</feature>
<feature type="splice variant" id="VSP_056990" description="In isoform 2." evidence="5">
    <location>
        <begin position="1"/>
        <end position="182"/>
    </location>
</feature>
<feature type="sequence variant" id="VAR_022808" description="In dbSNP:rs11556482." evidence="2 3 4">
    <original>V</original>
    <variation>L</variation>
    <location>
        <position position="129"/>
    </location>
</feature>
<feature type="sequence variant" id="VAR_022809" description="In dbSNP:rs6007594." evidence="2 3 4">
    <original>R</original>
    <variation>H</variation>
    <location>
        <position position="239"/>
    </location>
</feature>
<feature type="sequence conflict" description="In Ref. 4; AAH13696." evidence="6" ref="4">
    <original>T</original>
    <variation>R</variation>
    <location>
        <position position="195"/>
    </location>
</feature>
<evidence type="ECO:0000255" key="1"/>
<evidence type="ECO:0000269" key="2">
    <source>
    </source>
</evidence>
<evidence type="ECO:0000269" key="3">
    <source>
    </source>
</evidence>
<evidence type="ECO:0000269" key="4">
    <source>
    </source>
</evidence>
<evidence type="ECO:0000303" key="5">
    <source>
    </source>
</evidence>
<evidence type="ECO:0000305" key="6"/>
<evidence type="ECO:0007744" key="7">
    <source>
    </source>
</evidence>
<evidence type="ECO:0007744" key="8">
    <source>
    </source>
</evidence>
<reference key="1">
    <citation type="journal article" date="2004" name="Nat. Genet.">
        <title>Complete sequencing and characterization of 21,243 full-length human cDNAs.</title>
        <authorList>
            <person name="Ota T."/>
            <person name="Suzuki Y."/>
            <person name="Nishikawa T."/>
            <person name="Otsuki T."/>
            <person name="Sugiyama T."/>
            <person name="Irie R."/>
            <person name="Wakamatsu A."/>
            <person name="Hayashi K."/>
            <person name="Sato H."/>
            <person name="Nagai K."/>
            <person name="Kimura K."/>
            <person name="Makita H."/>
            <person name="Sekine M."/>
            <person name="Obayashi M."/>
            <person name="Nishi T."/>
            <person name="Shibahara T."/>
            <person name="Tanaka T."/>
            <person name="Ishii S."/>
            <person name="Yamamoto J."/>
            <person name="Saito K."/>
            <person name="Kawai Y."/>
            <person name="Isono Y."/>
            <person name="Nakamura Y."/>
            <person name="Nagahari K."/>
            <person name="Murakami K."/>
            <person name="Yasuda T."/>
            <person name="Iwayanagi T."/>
            <person name="Wagatsuma M."/>
            <person name="Shiratori A."/>
            <person name="Sudo H."/>
            <person name="Hosoiri T."/>
            <person name="Kaku Y."/>
            <person name="Kodaira H."/>
            <person name="Kondo H."/>
            <person name="Sugawara M."/>
            <person name="Takahashi M."/>
            <person name="Kanda K."/>
            <person name="Yokoi T."/>
            <person name="Furuya T."/>
            <person name="Kikkawa E."/>
            <person name="Omura Y."/>
            <person name="Abe K."/>
            <person name="Kamihara K."/>
            <person name="Katsuta N."/>
            <person name="Sato K."/>
            <person name="Tanikawa M."/>
            <person name="Yamazaki M."/>
            <person name="Ninomiya K."/>
            <person name="Ishibashi T."/>
            <person name="Yamashita H."/>
            <person name="Murakawa K."/>
            <person name="Fujimori K."/>
            <person name="Tanai H."/>
            <person name="Kimata M."/>
            <person name="Watanabe M."/>
            <person name="Hiraoka S."/>
            <person name="Chiba Y."/>
            <person name="Ishida S."/>
            <person name="Ono Y."/>
            <person name="Takiguchi S."/>
            <person name="Watanabe S."/>
            <person name="Yosida M."/>
            <person name="Hotuta T."/>
            <person name="Kusano J."/>
            <person name="Kanehori K."/>
            <person name="Takahashi-Fujii A."/>
            <person name="Hara H."/>
            <person name="Tanase T.-O."/>
            <person name="Nomura Y."/>
            <person name="Togiya S."/>
            <person name="Komai F."/>
            <person name="Hara R."/>
            <person name="Takeuchi K."/>
            <person name="Arita M."/>
            <person name="Imose N."/>
            <person name="Musashino K."/>
            <person name="Yuuki H."/>
            <person name="Oshima A."/>
            <person name="Sasaki N."/>
            <person name="Aotsuka S."/>
            <person name="Yoshikawa Y."/>
            <person name="Matsunawa H."/>
            <person name="Ichihara T."/>
            <person name="Shiohata N."/>
            <person name="Sano S."/>
            <person name="Moriya S."/>
            <person name="Momiyama H."/>
            <person name="Satoh N."/>
            <person name="Takami S."/>
            <person name="Terashima Y."/>
            <person name="Suzuki O."/>
            <person name="Nakagawa S."/>
            <person name="Senoh A."/>
            <person name="Mizoguchi H."/>
            <person name="Goto Y."/>
            <person name="Shimizu F."/>
            <person name="Wakebe H."/>
            <person name="Hishigaki H."/>
            <person name="Watanabe T."/>
            <person name="Sugiyama A."/>
            <person name="Takemoto M."/>
            <person name="Kawakami B."/>
            <person name="Yamazaki M."/>
            <person name="Watanabe K."/>
            <person name="Kumagai A."/>
            <person name="Itakura S."/>
            <person name="Fukuzumi Y."/>
            <person name="Fujimori Y."/>
            <person name="Komiyama M."/>
            <person name="Tashiro H."/>
            <person name="Tanigami A."/>
            <person name="Fujiwara T."/>
            <person name="Ono T."/>
            <person name="Yamada K."/>
            <person name="Fujii Y."/>
            <person name="Ozaki K."/>
            <person name="Hirao M."/>
            <person name="Ohmori Y."/>
            <person name="Kawabata A."/>
            <person name="Hikiji T."/>
            <person name="Kobatake N."/>
            <person name="Inagaki H."/>
            <person name="Ikema Y."/>
            <person name="Okamoto S."/>
            <person name="Okitani R."/>
            <person name="Kawakami T."/>
            <person name="Noguchi S."/>
            <person name="Itoh T."/>
            <person name="Shigeta K."/>
            <person name="Senba T."/>
            <person name="Matsumura K."/>
            <person name="Nakajima Y."/>
            <person name="Mizuno T."/>
            <person name="Morinaga M."/>
            <person name="Sasaki M."/>
            <person name="Togashi T."/>
            <person name="Oyama M."/>
            <person name="Hata H."/>
            <person name="Watanabe M."/>
            <person name="Komatsu T."/>
            <person name="Mizushima-Sugano J."/>
            <person name="Satoh T."/>
            <person name="Shirai Y."/>
            <person name="Takahashi Y."/>
            <person name="Nakagawa K."/>
            <person name="Okumura K."/>
            <person name="Nagase T."/>
            <person name="Nomura N."/>
            <person name="Kikuchi H."/>
            <person name="Masuho Y."/>
            <person name="Yamashita R."/>
            <person name="Nakai K."/>
            <person name="Yada T."/>
            <person name="Nakamura Y."/>
            <person name="Ohara O."/>
            <person name="Isogai T."/>
            <person name="Sugano S."/>
        </authorList>
    </citation>
    <scope>NUCLEOTIDE SEQUENCE [LARGE SCALE MRNA] (ISOFORMS 1 AND 2)</scope>
    <scope>VARIANTS LEU-129 AND HIS-239</scope>
    <source>
        <tissue>Testis</tissue>
        <tissue>Thalamus</tissue>
    </source>
</reference>
<reference key="2">
    <citation type="journal article" date="2004" name="Genome Biol.">
        <title>A genome annotation-driven approach to cloning the human ORFeome.</title>
        <authorList>
            <person name="Collins J.E."/>
            <person name="Wright C.L."/>
            <person name="Edwards C.A."/>
            <person name="Davis M.P."/>
            <person name="Grinham J.A."/>
            <person name="Cole C.G."/>
            <person name="Goward M.E."/>
            <person name="Aguado B."/>
            <person name="Mallya M."/>
            <person name="Mokrab Y."/>
            <person name="Huckle E.J."/>
            <person name="Beare D.M."/>
            <person name="Dunham I."/>
        </authorList>
    </citation>
    <scope>NUCLEOTIDE SEQUENCE [LARGE SCALE MRNA] (ISOFORM 1)</scope>
    <scope>VARIANTS LEU-129 AND HIS-239</scope>
</reference>
<reference key="3">
    <citation type="journal article" date="1999" name="Nature">
        <title>The DNA sequence of human chromosome 22.</title>
        <authorList>
            <person name="Dunham I."/>
            <person name="Hunt A.R."/>
            <person name="Collins J.E."/>
            <person name="Bruskiewich R."/>
            <person name="Beare D.M."/>
            <person name="Clamp M."/>
            <person name="Smink L.J."/>
            <person name="Ainscough R."/>
            <person name="Almeida J.P."/>
            <person name="Babbage A.K."/>
            <person name="Bagguley C."/>
            <person name="Bailey J."/>
            <person name="Barlow K.F."/>
            <person name="Bates K.N."/>
            <person name="Beasley O.P."/>
            <person name="Bird C.P."/>
            <person name="Blakey S.E."/>
            <person name="Bridgeman A.M."/>
            <person name="Buck D."/>
            <person name="Burgess J."/>
            <person name="Burrill W.D."/>
            <person name="Burton J."/>
            <person name="Carder C."/>
            <person name="Carter N.P."/>
            <person name="Chen Y."/>
            <person name="Clark G."/>
            <person name="Clegg S.M."/>
            <person name="Cobley V.E."/>
            <person name="Cole C.G."/>
            <person name="Collier R.E."/>
            <person name="Connor R."/>
            <person name="Conroy D."/>
            <person name="Corby N.R."/>
            <person name="Coville G.J."/>
            <person name="Cox A.V."/>
            <person name="Davis J."/>
            <person name="Dawson E."/>
            <person name="Dhami P.D."/>
            <person name="Dockree C."/>
            <person name="Dodsworth S.J."/>
            <person name="Durbin R.M."/>
            <person name="Ellington A.G."/>
            <person name="Evans K.L."/>
            <person name="Fey J.M."/>
            <person name="Fleming K."/>
            <person name="French L."/>
            <person name="Garner A.A."/>
            <person name="Gilbert J.G.R."/>
            <person name="Goward M.E."/>
            <person name="Grafham D.V."/>
            <person name="Griffiths M.N.D."/>
            <person name="Hall C."/>
            <person name="Hall R.E."/>
            <person name="Hall-Tamlyn G."/>
            <person name="Heathcott R.W."/>
            <person name="Ho S."/>
            <person name="Holmes S."/>
            <person name="Hunt S.E."/>
            <person name="Jones M.C."/>
            <person name="Kershaw J."/>
            <person name="Kimberley A.M."/>
            <person name="King A."/>
            <person name="Laird G.K."/>
            <person name="Langford C.F."/>
            <person name="Leversha M.A."/>
            <person name="Lloyd C."/>
            <person name="Lloyd D.M."/>
            <person name="Martyn I.D."/>
            <person name="Mashreghi-Mohammadi M."/>
            <person name="Matthews L.H."/>
            <person name="Mccann O.T."/>
            <person name="Mcclay J."/>
            <person name="Mclaren S."/>
            <person name="McMurray A.A."/>
            <person name="Milne S.A."/>
            <person name="Mortimore B.J."/>
            <person name="Odell C.N."/>
            <person name="Pavitt R."/>
            <person name="Pearce A.V."/>
            <person name="Pearson D."/>
            <person name="Phillimore B.J.C.T."/>
            <person name="Phillips S.H."/>
            <person name="Plumb R.W."/>
            <person name="Ramsay H."/>
            <person name="Ramsey Y."/>
            <person name="Rogers L."/>
            <person name="Ross M.T."/>
            <person name="Scott C.E."/>
            <person name="Sehra H.K."/>
            <person name="Skuce C.D."/>
            <person name="Smalley S."/>
            <person name="Smith M.L."/>
            <person name="Soderlund C."/>
            <person name="Spragon L."/>
            <person name="Steward C.A."/>
            <person name="Sulston J.E."/>
            <person name="Swann R.M."/>
            <person name="Vaudin M."/>
            <person name="Wall M."/>
            <person name="Wallis J.M."/>
            <person name="Whiteley M.N."/>
            <person name="Willey D.L."/>
            <person name="Williams L."/>
            <person name="Williams S.A."/>
            <person name="Williamson H."/>
            <person name="Wilmer T.E."/>
            <person name="Wilming L."/>
            <person name="Wright C.L."/>
            <person name="Hubbard T."/>
            <person name="Bentley D.R."/>
            <person name="Beck S."/>
            <person name="Rogers J."/>
            <person name="Shimizu N."/>
            <person name="Minoshima S."/>
            <person name="Kawasaki K."/>
            <person name="Sasaki T."/>
            <person name="Asakawa S."/>
            <person name="Kudoh J."/>
            <person name="Shintani A."/>
            <person name="Shibuya K."/>
            <person name="Yoshizaki Y."/>
            <person name="Aoki N."/>
            <person name="Mitsuyama S."/>
            <person name="Roe B.A."/>
            <person name="Chen F."/>
            <person name="Chu L."/>
            <person name="Crabtree J."/>
            <person name="Deschamps S."/>
            <person name="Do A."/>
            <person name="Do T."/>
            <person name="Dorman A."/>
            <person name="Fang F."/>
            <person name="Fu Y."/>
            <person name="Hu P."/>
            <person name="Hua A."/>
            <person name="Kenton S."/>
            <person name="Lai H."/>
            <person name="Lao H.I."/>
            <person name="Lewis J."/>
            <person name="Lewis S."/>
            <person name="Lin S.-P."/>
            <person name="Loh P."/>
            <person name="Malaj E."/>
            <person name="Nguyen T."/>
            <person name="Pan H."/>
            <person name="Phan S."/>
            <person name="Qi S."/>
            <person name="Qian Y."/>
            <person name="Ray L."/>
            <person name="Ren Q."/>
            <person name="Shaull S."/>
            <person name="Sloan D."/>
            <person name="Song L."/>
            <person name="Wang Q."/>
            <person name="Wang Y."/>
            <person name="Wang Z."/>
            <person name="White J."/>
            <person name="Willingham D."/>
            <person name="Wu H."/>
            <person name="Yao Z."/>
            <person name="Zhan M."/>
            <person name="Zhang G."/>
            <person name="Chissoe S."/>
            <person name="Murray J."/>
            <person name="Miller N."/>
            <person name="Minx P."/>
            <person name="Fulton R."/>
            <person name="Johnson D."/>
            <person name="Bemis G."/>
            <person name="Bentley D."/>
            <person name="Bradshaw H."/>
            <person name="Bourne S."/>
            <person name="Cordes M."/>
            <person name="Du Z."/>
            <person name="Fulton L."/>
            <person name="Goela D."/>
            <person name="Graves T."/>
            <person name="Hawkins J."/>
            <person name="Hinds K."/>
            <person name="Kemp K."/>
            <person name="Latreille P."/>
            <person name="Layman D."/>
            <person name="Ozersky P."/>
            <person name="Rohlfing T."/>
            <person name="Scheet P."/>
            <person name="Walker C."/>
            <person name="Wamsley A."/>
            <person name="Wohldmann P."/>
            <person name="Pepin K."/>
            <person name="Nelson J."/>
            <person name="Korf I."/>
            <person name="Bedell J.A."/>
            <person name="Hillier L.W."/>
            <person name="Mardis E."/>
            <person name="Waterston R."/>
            <person name="Wilson R."/>
            <person name="Emanuel B.S."/>
            <person name="Shaikh T."/>
            <person name="Kurahashi H."/>
            <person name="Saitta S."/>
            <person name="Budarf M.L."/>
            <person name="McDermid H.E."/>
            <person name="Johnson A."/>
            <person name="Wong A.C.C."/>
            <person name="Morrow B.E."/>
            <person name="Edelmann L."/>
            <person name="Kim U.J."/>
            <person name="Shizuya H."/>
            <person name="Simon M.I."/>
            <person name="Dumanski J.P."/>
            <person name="Peyrard M."/>
            <person name="Kedra D."/>
            <person name="Seroussi E."/>
            <person name="Fransson I."/>
            <person name="Tapia I."/>
            <person name="Bruder C.E."/>
            <person name="O'Brien K.P."/>
            <person name="Wilkinson P."/>
            <person name="Bodenteich A."/>
            <person name="Hartman K."/>
            <person name="Hu X."/>
            <person name="Khan A.S."/>
            <person name="Lane L."/>
            <person name="Tilahun Y."/>
            <person name="Wright H."/>
        </authorList>
    </citation>
    <scope>NUCLEOTIDE SEQUENCE [LARGE SCALE GENOMIC DNA]</scope>
</reference>
<reference key="4">
    <citation type="journal article" date="2004" name="Genome Res.">
        <title>The status, quality, and expansion of the NIH full-length cDNA project: the Mammalian Gene Collection (MGC).</title>
        <authorList>
            <consortium name="The MGC Project Team"/>
        </authorList>
    </citation>
    <scope>NUCLEOTIDE SEQUENCE [LARGE SCALE MRNA] (ISOFORM 1)</scope>
    <scope>VARIANTS LEU-129 AND HIS-239</scope>
    <source>
        <tissue>Ovary</tissue>
    </source>
</reference>
<reference key="5">
    <citation type="journal article" date="2012" name="Proc. Natl. Acad. Sci. U.S.A.">
        <title>N-terminal acetylome analyses and functional insights of the N-terminal acetyltransferase NatB.</title>
        <authorList>
            <person name="Van Damme P."/>
            <person name="Lasa M."/>
            <person name="Polevoda B."/>
            <person name="Gazquez C."/>
            <person name="Elosegui-Artola A."/>
            <person name="Kim D.S."/>
            <person name="De Juan-Pardo E."/>
            <person name="Demeyer K."/>
            <person name="Hole K."/>
            <person name="Larrea E."/>
            <person name="Timmerman E."/>
            <person name="Prieto J."/>
            <person name="Arnesen T."/>
            <person name="Sherman F."/>
            <person name="Gevaert K."/>
            <person name="Aldabe R."/>
        </authorList>
    </citation>
    <scope>ACETYLATION [LARGE SCALE ANALYSIS] AT MET-1</scope>
    <scope>IDENTIFICATION BY MASS SPECTROMETRY [LARGE SCALE ANALYSIS]</scope>
</reference>
<reference key="6">
    <citation type="journal article" date="2013" name="J. Proteome Res.">
        <title>Toward a comprehensive characterization of a human cancer cell phosphoproteome.</title>
        <authorList>
            <person name="Zhou H."/>
            <person name="Di Palma S."/>
            <person name="Preisinger C."/>
            <person name="Peng M."/>
            <person name="Polat A.N."/>
            <person name="Heck A.J."/>
            <person name="Mohammed S."/>
        </authorList>
    </citation>
    <scope>PHOSPHORYLATION [LARGE SCALE ANALYSIS] AT SER-311</scope>
    <scope>IDENTIFICATION BY MASS SPECTROMETRY [LARGE SCALE ANALYSIS]</scope>
    <source>
        <tissue>Erythroleukemia</tissue>
    </source>
</reference>
<gene>
    <name type="primary">FAM118A</name>
    <name type="synonym">C22orf8</name>
</gene>
<protein>
    <recommendedName>
        <fullName>Protein FAM118A</fullName>
    </recommendedName>
</protein>